<accession>Q28309</accession>
<organism>
    <name type="scientific">Canis lupus familiaris</name>
    <name type="common">Dog</name>
    <name type="synonym">Canis familiaris</name>
    <dbReference type="NCBI Taxonomy" id="9615"/>
    <lineage>
        <taxon>Eukaryota</taxon>
        <taxon>Metazoa</taxon>
        <taxon>Chordata</taxon>
        <taxon>Craniata</taxon>
        <taxon>Vertebrata</taxon>
        <taxon>Euteleostomi</taxon>
        <taxon>Mammalia</taxon>
        <taxon>Eutheria</taxon>
        <taxon>Laurasiatheria</taxon>
        <taxon>Carnivora</taxon>
        <taxon>Caniformia</taxon>
        <taxon>Canidae</taxon>
        <taxon>Canis</taxon>
    </lineage>
</organism>
<comment type="function">
    <text evidence="4">Receptor for adenosine. The activity of this receptor is mediated by G proteins which inhibits adenylyl cyclase.</text>
</comment>
<comment type="subcellular location">
    <subcellularLocation>
        <location evidence="4">Cell membrane</location>
        <topology evidence="2">Multi-pass membrane protein</topology>
    </subcellularLocation>
</comment>
<comment type="similarity">
    <text evidence="3">Belongs to the G-protein coupled receptor 1 family.</text>
</comment>
<proteinExistence type="evidence at transcript level"/>
<reference key="1">
    <citation type="journal article" date="1997" name="Mol. Pharmacol.">
        <title>Canine mast cell adenosine receptors: cloning and expression of the A3 receptor and evidence that degranulation is mediated by the A2B receptor.</title>
        <authorList>
            <person name="Auchampach J.A."/>
            <person name="Jin X."/>
            <person name="Wan T.C."/>
            <person name="Caughey G.H."/>
            <person name="Linden J."/>
        </authorList>
    </citation>
    <scope>NUCLEOTIDE SEQUENCE [MRNA]</scope>
    <scope>FUNCTION</scope>
    <scope>SUBCELLULAR LOCATION</scope>
</reference>
<evidence type="ECO:0000250" key="1"/>
<evidence type="ECO:0000255" key="2"/>
<evidence type="ECO:0000255" key="3">
    <source>
        <dbReference type="PROSITE-ProRule" id="PRU00521"/>
    </source>
</evidence>
<evidence type="ECO:0000269" key="4">
    <source>
    </source>
</evidence>
<sequence>MAVNGTALLLANVTYITVEILIGLCAIVGNVLVIWVVKLNPSLQTTTFYFIVSLALADIAVGVLVMPLAIVISLGITIQFYNCLFMTCLLLIFTHASIMSLLAIAVDRYLRVKLTVRYRRVTTQRRIWLALGLCWLVSFLVGLTPMFGWNMKLTSEHQRNVTFLSCQFSSVMRMDYMVYFSFFTWILIPLVVMCAIYLDIFYVIRNKLNQNFSSSKETGAFYGREFKTAKSLFLVLFLFAFSWLPLSIINCITYFHGEVPQIILYLGILLSHANSMMNPIVYAYKIKKFKETYLLIFKTYMICQSSDSLDSSTE</sequence>
<keyword id="KW-1003">Cell membrane</keyword>
<keyword id="KW-1015">Disulfide bond</keyword>
<keyword id="KW-0297">G-protein coupled receptor</keyword>
<keyword id="KW-0325">Glycoprotein</keyword>
<keyword id="KW-0449">Lipoprotein</keyword>
<keyword id="KW-0472">Membrane</keyword>
<keyword id="KW-0564">Palmitate</keyword>
<keyword id="KW-0675">Receptor</keyword>
<keyword id="KW-1185">Reference proteome</keyword>
<keyword id="KW-0807">Transducer</keyword>
<keyword id="KW-0812">Transmembrane</keyword>
<keyword id="KW-1133">Transmembrane helix</keyword>
<feature type="chain" id="PRO_0000069009" description="Adenosine receptor A3">
    <location>
        <begin position="1"/>
        <end position="314"/>
    </location>
</feature>
<feature type="topological domain" description="Extracellular" evidence="1">
    <location>
        <begin position="1"/>
        <end position="14"/>
    </location>
</feature>
<feature type="transmembrane region" description="Helical; Name=1" evidence="1">
    <location>
        <begin position="15"/>
        <end position="37"/>
    </location>
</feature>
<feature type="topological domain" description="Cytoplasmic" evidence="1">
    <location>
        <begin position="38"/>
        <end position="48"/>
    </location>
</feature>
<feature type="transmembrane region" description="Helical; Name=2" evidence="1">
    <location>
        <begin position="49"/>
        <end position="72"/>
    </location>
</feature>
<feature type="topological domain" description="Extracellular" evidence="1">
    <location>
        <begin position="73"/>
        <end position="84"/>
    </location>
</feature>
<feature type="transmembrane region" description="Helical; Name=3" evidence="1">
    <location>
        <begin position="85"/>
        <end position="106"/>
    </location>
</feature>
<feature type="topological domain" description="Cytoplasmic" evidence="1">
    <location>
        <begin position="107"/>
        <end position="126"/>
    </location>
</feature>
<feature type="transmembrane region" description="Helical; Name=4" evidence="1">
    <location>
        <begin position="127"/>
        <end position="148"/>
    </location>
</feature>
<feature type="topological domain" description="Extracellular" evidence="1">
    <location>
        <begin position="149"/>
        <end position="177"/>
    </location>
</feature>
<feature type="transmembrane region" description="Helical; Name=5" evidence="1">
    <location>
        <begin position="178"/>
        <end position="198"/>
    </location>
</feature>
<feature type="topological domain" description="Cytoplasmic" evidence="1">
    <location>
        <begin position="199"/>
        <end position="231"/>
    </location>
</feature>
<feature type="transmembrane region" description="Helical; Name=6" evidence="1">
    <location>
        <begin position="232"/>
        <end position="255"/>
    </location>
</feature>
<feature type="topological domain" description="Extracellular" evidence="1">
    <location>
        <begin position="256"/>
        <end position="261"/>
    </location>
</feature>
<feature type="transmembrane region" description="Helical; Name=7" evidence="1">
    <location>
        <begin position="262"/>
        <end position="284"/>
    </location>
</feature>
<feature type="topological domain" description="Cytoplasmic" evidence="1">
    <location>
        <begin position="285"/>
        <end position="314"/>
    </location>
</feature>
<feature type="lipid moiety-binding region" description="S-palmitoyl cysteine" evidence="2">
    <location>
        <position position="303"/>
    </location>
</feature>
<feature type="glycosylation site" description="N-linked (GlcNAc...) asparagine" evidence="2">
    <location>
        <position position="4"/>
    </location>
</feature>
<feature type="glycosylation site" description="N-linked (GlcNAc...) asparagine" evidence="2">
    <location>
        <position position="12"/>
    </location>
</feature>
<feature type="glycosylation site" description="N-linked (GlcNAc...) asparagine" evidence="2">
    <location>
        <position position="160"/>
    </location>
</feature>
<feature type="disulfide bond" evidence="3">
    <location>
        <begin position="83"/>
        <end position="166"/>
    </location>
</feature>
<protein>
    <recommendedName>
        <fullName>Adenosine receptor A3</fullName>
    </recommendedName>
</protein>
<dbReference type="EMBL" id="U54792">
    <property type="protein sequence ID" value="AAB03503.1"/>
    <property type="molecule type" value="mRNA"/>
</dbReference>
<dbReference type="RefSeq" id="NP_001003178.1">
    <property type="nucleotide sequence ID" value="NM_001003178.1"/>
</dbReference>
<dbReference type="SMR" id="Q28309"/>
<dbReference type="FunCoup" id="Q28309">
    <property type="interactions" value="12"/>
</dbReference>
<dbReference type="STRING" id="9615.ENSCAFP00000031533"/>
<dbReference type="BindingDB" id="Q28309"/>
<dbReference type="ChEMBL" id="CHEMBL3611963"/>
<dbReference type="GlyCosmos" id="Q28309">
    <property type="glycosylation" value="3 sites, No reported glycans"/>
</dbReference>
<dbReference type="PaxDb" id="9612-ENSCAFP00000031533"/>
<dbReference type="Ensembl" id="ENSCAFT00000036183.4">
    <property type="protein sequence ID" value="ENSCAFP00000031533.2"/>
    <property type="gene ID" value="ENSCAFG00000013692.5"/>
</dbReference>
<dbReference type="Ensembl" id="ENSCAFT00030038007.1">
    <property type="protein sequence ID" value="ENSCAFP00030033162.1"/>
    <property type="gene ID" value="ENSCAFG00030020709.1"/>
</dbReference>
<dbReference type="Ensembl" id="ENSCAFT00040026920.1">
    <property type="protein sequence ID" value="ENSCAFP00040023393.1"/>
    <property type="gene ID" value="ENSCAFG00040014600.1"/>
</dbReference>
<dbReference type="Ensembl" id="ENSCAFT00845014825.1">
    <property type="protein sequence ID" value="ENSCAFP00845011489.1"/>
    <property type="gene ID" value="ENSCAFG00845008429.1"/>
</dbReference>
<dbReference type="GeneID" id="403805"/>
<dbReference type="KEGG" id="cfa:403805"/>
<dbReference type="CTD" id="140"/>
<dbReference type="VEuPathDB" id="HostDB:ENSCAFG00845008429"/>
<dbReference type="VGNC" id="VGNC:37668">
    <property type="gene designation" value="ADORA3"/>
</dbReference>
<dbReference type="eggNOG" id="KOG3656">
    <property type="taxonomic scope" value="Eukaryota"/>
</dbReference>
<dbReference type="GeneTree" id="ENSGT01030000234555"/>
<dbReference type="HOGENOM" id="CLU_009579_11_5_1"/>
<dbReference type="InParanoid" id="Q28309"/>
<dbReference type="OMA" id="INCITYF"/>
<dbReference type="OrthoDB" id="284782at2759"/>
<dbReference type="TreeFam" id="TF325296"/>
<dbReference type="Reactome" id="R-CFA-417973">
    <property type="pathway name" value="Adenosine P1 receptors"/>
</dbReference>
<dbReference type="Reactome" id="R-CFA-418594">
    <property type="pathway name" value="G alpha (i) signalling events"/>
</dbReference>
<dbReference type="Proteomes" id="UP000002254">
    <property type="component" value="Chromosome 17"/>
</dbReference>
<dbReference type="Proteomes" id="UP000694429">
    <property type="component" value="Chromosome 17"/>
</dbReference>
<dbReference type="Proteomes" id="UP000694542">
    <property type="component" value="Chromosome 17"/>
</dbReference>
<dbReference type="Proteomes" id="UP000805418">
    <property type="component" value="Chromosome 17"/>
</dbReference>
<dbReference type="Bgee" id="ENSCAFG00000013692">
    <property type="expression patterns" value="Expressed in granulocyte and 42 other cell types or tissues"/>
</dbReference>
<dbReference type="GO" id="GO:0030425">
    <property type="term" value="C:dendrite"/>
    <property type="evidence" value="ECO:0000318"/>
    <property type="project" value="GO_Central"/>
</dbReference>
<dbReference type="GO" id="GO:0005886">
    <property type="term" value="C:plasma membrane"/>
    <property type="evidence" value="ECO:0000318"/>
    <property type="project" value="GO_Central"/>
</dbReference>
<dbReference type="GO" id="GO:0045202">
    <property type="term" value="C:synapse"/>
    <property type="evidence" value="ECO:0000318"/>
    <property type="project" value="GO_Central"/>
</dbReference>
<dbReference type="GO" id="GO:0001609">
    <property type="term" value="F:G protein-coupled adenosine receptor activity"/>
    <property type="evidence" value="ECO:0000318"/>
    <property type="project" value="GO_Central"/>
</dbReference>
<dbReference type="GO" id="GO:0001973">
    <property type="term" value="P:G protein-coupled adenosine receptor signaling pathway"/>
    <property type="evidence" value="ECO:0000318"/>
    <property type="project" value="GO_Central"/>
</dbReference>
<dbReference type="GO" id="GO:0030336">
    <property type="term" value="P:negative regulation of cell migration"/>
    <property type="evidence" value="ECO:0007669"/>
    <property type="project" value="Ensembl"/>
</dbReference>
<dbReference type="GO" id="GO:0008285">
    <property type="term" value="P:negative regulation of cell population proliferation"/>
    <property type="evidence" value="ECO:0007669"/>
    <property type="project" value="Ensembl"/>
</dbReference>
<dbReference type="CDD" id="cd15070">
    <property type="entry name" value="7tmA_Adenosine_R_A3"/>
    <property type="match status" value="1"/>
</dbReference>
<dbReference type="FunFam" id="1.20.1070.10:FF:000061">
    <property type="entry name" value="Adenosine receptor A2"/>
    <property type="match status" value="1"/>
</dbReference>
<dbReference type="Gene3D" id="1.20.1070.10">
    <property type="entry name" value="Rhodopsin 7-helix transmembrane proteins"/>
    <property type="match status" value="1"/>
</dbReference>
<dbReference type="InterPro" id="IPR000466">
    <property type="entry name" value="Adeno_A3_rcpt"/>
</dbReference>
<dbReference type="InterPro" id="IPR001634">
    <property type="entry name" value="Adenosn_rcpt"/>
</dbReference>
<dbReference type="InterPro" id="IPR000276">
    <property type="entry name" value="GPCR_Rhodpsn"/>
</dbReference>
<dbReference type="InterPro" id="IPR017452">
    <property type="entry name" value="GPCR_Rhodpsn_7TM"/>
</dbReference>
<dbReference type="PANTHER" id="PTHR24246:SF2">
    <property type="entry name" value="ADENOSINE RECEPTOR A3"/>
    <property type="match status" value="1"/>
</dbReference>
<dbReference type="PANTHER" id="PTHR24246">
    <property type="entry name" value="OLFACTORY RECEPTOR AND ADENOSINE RECEPTOR"/>
    <property type="match status" value="1"/>
</dbReference>
<dbReference type="Pfam" id="PF00001">
    <property type="entry name" value="7tm_1"/>
    <property type="match status" value="1"/>
</dbReference>
<dbReference type="PRINTS" id="PR00555">
    <property type="entry name" value="ADENOSINEA3R"/>
</dbReference>
<dbReference type="PRINTS" id="PR00424">
    <property type="entry name" value="ADENOSINER"/>
</dbReference>
<dbReference type="PRINTS" id="PR00237">
    <property type="entry name" value="GPCRRHODOPSN"/>
</dbReference>
<dbReference type="SMART" id="SM01381">
    <property type="entry name" value="7TM_GPCR_Srsx"/>
    <property type="match status" value="1"/>
</dbReference>
<dbReference type="SUPFAM" id="SSF81321">
    <property type="entry name" value="Family A G protein-coupled receptor-like"/>
    <property type="match status" value="1"/>
</dbReference>
<dbReference type="PROSITE" id="PS00237">
    <property type="entry name" value="G_PROTEIN_RECEP_F1_1"/>
    <property type="match status" value="1"/>
</dbReference>
<dbReference type="PROSITE" id="PS50262">
    <property type="entry name" value="G_PROTEIN_RECEP_F1_2"/>
    <property type="match status" value="1"/>
</dbReference>
<name>AA3R_CANLF</name>
<gene>
    <name type="primary">ADORA3</name>
</gene>